<accession>B0TIN7</accession>
<feature type="chain" id="PRO_1000087489" description="tRNA N6-adenosine threonylcarbamoyltransferase">
    <location>
        <begin position="1"/>
        <end position="338"/>
    </location>
</feature>
<feature type="binding site" evidence="1">
    <location>
        <position position="111"/>
    </location>
    <ligand>
        <name>Fe cation</name>
        <dbReference type="ChEBI" id="CHEBI:24875"/>
    </ligand>
</feature>
<feature type="binding site" evidence="1">
    <location>
        <position position="115"/>
    </location>
    <ligand>
        <name>Fe cation</name>
        <dbReference type="ChEBI" id="CHEBI:24875"/>
    </ligand>
</feature>
<feature type="binding site" evidence="1">
    <location>
        <begin position="134"/>
        <end position="138"/>
    </location>
    <ligand>
        <name>substrate</name>
    </ligand>
</feature>
<feature type="binding site" evidence="1">
    <location>
        <position position="167"/>
    </location>
    <ligand>
        <name>substrate</name>
    </ligand>
</feature>
<feature type="binding site" evidence="1">
    <location>
        <position position="180"/>
    </location>
    <ligand>
        <name>substrate</name>
    </ligand>
</feature>
<feature type="binding site" evidence="1">
    <location>
        <position position="272"/>
    </location>
    <ligand>
        <name>substrate</name>
    </ligand>
</feature>
<feature type="binding site" evidence="1">
    <location>
        <position position="300"/>
    </location>
    <ligand>
        <name>Fe cation</name>
        <dbReference type="ChEBI" id="CHEBI:24875"/>
    </ligand>
</feature>
<protein>
    <recommendedName>
        <fullName evidence="1">tRNA N6-adenosine threonylcarbamoyltransferase</fullName>
        <ecNumber evidence="1">2.3.1.234</ecNumber>
    </recommendedName>
    <alternativeName>
        <fullName evidence="1">N6-L-threonylcarbamoyladenine synthase</fullName>
        <shortName evidence="1">t(6)A synthase</shortName>
    </alternativeName>
    <alternativeName>
        <fullName evidence="1">t(6)A37 threonylcarbamoyladenosine biosynthesis protein TsaD</fullName>
    </alternativeName>
    <alternativeName>
        <fullName evidence="1">tRNA threonylcarbamoyladenosine biosynthesis protein TsaD</fullName>
    </alternativeName>
</protein>
<keyword id="KW-0012">Acyltransferase</keyword>
<keyword id="KW-0963">Cytoplasm</keyword>
<keyword id="KW-0408">Iron</keyword>
<keyword id="KW-0479">Metal-binding</keyword>
<keyword id="KW-0808">Transferase</keyword>
<keyword id="KW-0819">tRNA processing</keyword>
<dbReference type="EC" id="2.3.1.234" evidence="1"/>
<dbReference type="EMBL" id="CP000931">
    <property type="protein sequence ID" value="ABZ75582.1"/>
    <property type="molecule type" value="Genomic_DNA"/>
</dbReference>
<dbReference type="RefSeq" id="WP_012276130.1">
    <property type="nucleotide sequence ID" value="NC_010334.1"/>
</dbReference>
<dbReference type="SMR" id="B0TIN7"/>
<dbReference type="STRING" id="458817.Shal_1008"/>
<dbReference type="KEGG" id="shl:Shal_1008"/>
<dbReference type="eggNOG" id="COG0533">
    <property type="taxonomic scope" value="Bacteria"/>
</dbReference>
<dbReference type="HOGENOM" id="CLU_023208_0_0_6"/>
<dbReference type="OrthoDB" id="9806197at2"/>
<dbReference type="Proteomes" id="UP000001317">
    <property type="component" value="Chromosome"/>
</dbReference>
<dbReference type="GO" id="GO:0005737">
    <property type="term" value="C:cytoplasm"/>
    <property type="evidence" value="ECO:0007669"/>
    <property type="project" value="UniProtKB-SubCell"/>
</dbReference>
<dbReference type="GO" id="GO:0005506">
    <property type="term" value="F:iron ion binding"/>
    <property type="evidence" value="ECO:0007669"/>
    <property type="project" value="UniProtKB-UniRule"/>
</dbReference>
<dbReference type="GO" id="GO:0061711">
    <property type="term" value="F:N(6)-L-threonylcarbamoyladenine synthase activity"/>
    <property type="evidence" value="ECO:0007669"/>
    <property type="project" value="UniProtKB-EC"/>
</dbReference>
<dbReference type="GO" id="GO:0002949">
    <property type="term" value="P:tRNA threonylcarbamoyladenosine modification"/>
    <property type="evidence" value="ECO:0007669"/>
    <property type="project" value="UniProtKB-UniRule"/>
</dbReference>
<dbReference type="CDD" id="cd24133">
    <property type="entry name" value="ASKHA_NBD_TsaD_bac"/>
    <property type="match status" value="1"/>
</dbReference>
<dbReference type="FunFam" id="3.30.420.40:FF:000031">
    <property type="entry name" value="tRNA N6-adenosine threonylcarbamoyltransferase"/>
    <property type="match status" value="1"/>
</dbReference>
<dbReference type="Gene3D" id="3.30.420.40">
    <property type="match status" value="2"/>
</dbReference>
<dbReference type="HAMAP" id="MF_01445">
    <property type="entry name" value="TsaD"/>
    <property type="match status" value="1"/>
</dbReference>
<dbReference type="InterPro" id="IPR043129">
    <property type="entry name" value="ATPase_NBD"/>
</dbReference>
<dbReference type="InterPro" id="IPR000905">
    <property type="entry name" value="Gcp-like_dom"/>
</dbReference>
<dbReference type="InterPro" id="IPR017861">
    <property type="entry name" value="KAE1/TsaD"/>
</dbReference>
<dbReference type="InterPro" id="IPR017860">
    <property type="entry name" value="Peptidase_M22_CS"/>
</dbReference>
<dbReference type="InterPro" id="IPR022450">
    <property type="entry name" value="TsaD"/>
</dbReference>
<dbReference type="NCBIfam" id="TIGR00329">
    <property type="entry name" value="gcp_kae1"/>
    <property type="match status" value="1"/>
</dbReference>
<dbReference type="NCBIfam" id="TIGR03723">
    <property type="entry name" value="T6A_TsaD_YgjD"/>
    <property type="match status" value="1"/>
</dbReference>
<dbReference type="PANTHER" id="PTHR11735">
    <property type="entry name" value="TRNA N6-ADENOSINE THREONYLCARBAMOYLTRANSFERASE"/>
    <property type="match status" value="1"/>
</dbReference>
<dbReference type="PANTHER" id="PTHR11735:SF6">
    <property type="entry name" value="TRNA N6-ADENOSINE THREONYLCARBAMOYLTRANSFERASE, MITOCHONDRIAL"/>
    <property type="match status" value="1"/>
</dbReference>
<dbReference type="Pfam" id="PF00814">
    <property type="entry name" value="TsaD"/>
    <property type="match status" value="1"/>
</dbReference>
<dbReference type="PRINTS" id="PR00789">
    <property type="entry name" value="OSIALOPTASE"/>
</dbReference>
<dbReference type="SUPFAM" id="SSF53067">
    <property type="entry name" value="Actin-like ATPase domain"/>
    <property type="match status" value="2"/>
</dbReference>
<dbReference type="PROSITE" id="PS01016">
    <property type="entry name" value="GLYCOPROTEASE"/>
    <property type="match status" value="1"/>
</dbReference>
<sequence length="338" mass="36090">MRVLGIETSCDETGIAVYDDEKGLLSHALYSQVKLHADYGGVVPELASRDHVRKIVPLIRQALADADMTIEDLDGIAYTKGPGLIGALLVGACVGRALAFSWDKPAIGVHHMEGHLLAPMLEDDVPEFPFLALLVSGGHSMLVGVEGIGRYTVLGESVDDAAGEAFDKTAKLMGLDYPGGPRLSKLAAKGVPNSYRFPRPMTDKPGLNMSFSGLKTFAANTIAAEPKDEQTRANIACAFEEAVVDTLGIKCKRALKQTGYKNLVIAGGVSANTRLRASLSEMMQGLGGKVYYPRGEFCTDNGAMIAYAGLQRLKAGQVEDLAVKGQPRWPLDTLEPVD</sequence>
<proteinExistence type="inferred from homology"/>
<organism>
    <name type="scientific">Shewanella halifaxensis (strain HAW-EB4)</name>
    <dbReference type="NCBI Taxonomy" id="458817"/>
    <lineage>
        <taxon>Bacteria</taxon>
        <taxon>Pseudomonadati</taxon>
        <taxon>Pseudomonadota</taxon>
        <taxon>Gammaproteobacteria</taxon>
        <taxon>Alteromonadales</taxon>
        <taxon>Shewanellaceae</taxon>
        <taxon>Shewanella</taxon>
    </lineage>
</organism>
<reference key="1">
    <citation type="submission" date="2008-01" db="EMBL/GenBank/DDBJ databases">
        <title>Complete sequence of Shewanella halifaxensis HAW-EB4.</title>
        <authorList>
            <consortium name="US DOE Joint Genome Institute"/>
            <person name="Copeland A."/>
            <person name="Lucas S."/>
            <person name="Lapidus A."/>
            <person name="Glavina del Rio T."/>
            <person name="Dalin E."/>
            <person name="Tice H."/>
            <person name="Bruce D."/>
            <person name="Goodwin L."/>
            <person name="Pitluck S."/>
            <person name="Sims D."/>
            <person name="Brettin T."/>
            <person name="Detter J.C."/>
            <person name="Han C."/>
            <person name="Kuske C.R."/>
            <person name="Schmutz J."/>
            <person name="Larimer F."/>
            <person name="Land M."/>
            <person name="Hauser L."/>
            <person name="Kyrpides N."/>
            <person name="Kim E."/>
            <person name="Zhao J.-S."/>
            <person name="Richardson P."/>
        </authorList>
    </citation>
    <scope>NUCLEOTIDE SEQUENCE [LARGE SCALE GENOMIC DNA]</scope>
    <source>
        <strain>HAW-EB4</strain>
    </source>
</reference>
<gene>
    <name evidence="1" type="primary">tsaD</name>
    <name type="synonym">gcp</name>
    <name type="ordered locus">Shal_1008</name>
</gene>
<name>TSAD_SHEHH</name>
<evidence type="ECO:0000255" key="1">
    <source>
        <dbReference type="HAMAP-Rule" id="MF_01445"/>
    </source>
</evidence>
<comment type="function">
    <text evidence="1">Required for the formation of a threonylcarbamoyl group on adenosine at position 37 (t(6)A37) in tRNAs that read codons beginning with adenine. Is involved in the transfer of the threonylcarbamoyl moiety of threonylcarbamoyl-AMP (TC-AMP) to the N6 group of A37, together with TsaE and TsaB. TsaD likely plays a direct catalytic role in this reaction.</text>
</comment>
<comment type="catalytic activity">
    <reaction evidence="1">
        <text>L-threonylcarbamoyladenylate + adenosine(37) in tRNA = N(6)-L-threonylcarbamoyladenosine(37) in tRNA + AMP + H(+)</text>
        <dbReference type="Rhea" id="RHEA:37059"/>
        <dbReference type="Rhea" id="RHEA-COMP:10162"/>
        <dbReference type="Rhea" id="RHEA-COMP:10163"/>
        <dbReference type="ChEBI" id="CHEBI:15378"/>
        <dbReference type="ChEBI" id="CHEBI:73682"/>
        <dbReference type="ChEBI" id="CHEBI:74411"/>
        <dbReference type="ChEBI" id="CHEBI:74418"/>
        <dbReference type="ChEBI" id="CHEBI:456215"/>
        <dbReference type="EC" id="2.3.1.234"/>
    </reaction>
</comment>
<comment type="cofactor">
    <cofactor evidence="1">
        <name>Fe(2+)</name>
        <dbReference type="ChEBI" id="CHEBI:29033"/>
    </cofactor>
    <text evidence="1">Binds 1 Fe(2+) ion per subunit.</text>
</comment>
<comment type="subcellular location">
    <subcellularLocation>
        <location evidence="1">Cytoplasm</location>
    </subcellularLocation>
</comment>
<comment type="similarity">
    <text evidence="1">Belongs to the KAE1 / TsaD family.</text>
</comment>